<dbReference type="EC" id="3.2.1.23"/>
<dbReference type="EMBL" id="M34696">
    <property type="protein sequence ID" value="AAA72843.1"/>
    <property type="molecule type" value="Genomic_DNA"/>
</dbReference>
<dbReference type="EMBL" id="AF133096">
    <property type="protein sequence ID" value="AAD21094.1"/>
    <property type="molecule type" value="Genomic_DNA"/>
</dbReference>
<dbReference type="EMBL" id="AE006641">
    <property type="protein sequence ID" value="AAK43121.1"/>
    <property type="molecule type" value="Genomic_DNA"/>
</dbReference>
<dbReference type="PIR" id="B90483">
    <property type="entry name" value="B90483"/>
</dbReference>
<dbReference type="PIR" id="JQ0767">
    <property type="entry name" value="JQ0767"/>
</dbReference>
<dbReference type="PDB" id="1GOW">
    <property type="method" value="X-ray"/>
    <property type="resolution" value="2.60 A"/>
    <property type="chains" value="A/B=1-489"/>
</dbReference>
<dbReference type="PDB" id="1UWI">
    <property type="method" value="X-ray"/>
    <property type="resolution" value="2.55 A"/>
    <property type="chains" value="A/B/C/D=1-489"/>
</dbReference>
<dbReference type="PDB" id="1UWQ">
    <property type="method" value="X-ray"/>
    <property type="resolution" value="2.02 A"/>
    <property type="chains" value="A/B=1-489"/>
</dbReference>
<dbReference type="PDB" id="1UWR">
    <property type="method" value="X-ray"/>
    <property type="resolution" value="2.14 A"/>
    <property type="chains" value="A/B=1-489"/>
</dbReference>
<dbReference type="PDB" id="1UWS">
    <property type="method" value="X-ray"/>
    <property type="resolution" value="1.95 A"/>
    <property type="chains" value="A/B=1-489"/>
</dbReference>
<dbReference type="PDB" id="1UWT">
    <property type="method" value="X-ray"/>
    <property type="resolution" value="1.95 A"/>
    <property type="chains" value="A/B=1-489"/>
</dbReference>
<dbReference type="PDB" id="1UWU">
    <property type="method" value="X-ray"/>
    <property type="resolution" value="1.95 A"/>
    <property type="chains" value="A/B=1-489"/>
</dbReference>
<dbReference type="PDB" id="2CEQ">
    <property type="method" value="X-ray"/>
    <property type="resolution" value="2.14 A"/>
    <property type="chains" value="A/B=1-489"/>
</dbReference>
<dbReference type="PDB" id="2CER">
    <property type="method" value="X-ray"/>
    <property type="resolution" value="2.29 A"/>
    <property type="chains" value="A/B=1-489"/>
</dbReference>
<dbReference type="PDB" id="4EAM">
    <property type="method" value="X-ray"/>
    <property type="resolution" value="1.70 A"/>
    <property type="chains" value="A/B=1-489"/>
</dbReference>
<dbReference type="PDB" id="4EAN">
    <property type="method" value="X-ray"/>
    <property type="resolution" value="1.75 A"/>
    <property type="chains" value="A/B=1-489"/>
</dbReference>
<dbReference type="PDB" id="5I3D">
    <property type="method" value="X-ray"/>
    <property type="resolution" value="2.16 A"/>
    <property type="chains" value="A/B/C/D=1-489"/>
</dbReference>
<dbReference type="PDB" id="5IXE">
    <property type="method" value="X-ray"/>
    <property type="resolution" value="1.75 A"/>
    <property type="chains" value="A/B=1-489"/>
</dbReference>
<dbReference type="PDB" id="7UZ1">
    <property type="method" value="X-ray"/>
    <property type="resolution" value="1.58 A"/>
    <property type="chains" value="A/B=1-489"/>
</dbReference>
<dbReference type="PDB" id="7UZ2">
    <property type="method" value="X-ray"/>
    <property type="resolution" value="1.83 A"/>
    <property type="chains" value="A/B=1-489"/>
</dbReference>
<dbReference type="PDBsum" id="1GOW"/>
<dbReference type="PDBsum" id="1UWI"/>
<dbReference type="PDBsum" id="1UWQ"/>
<dbReference type="PDBsum" id="1UWR"/>
<dbReference type="PDBsum" id="1UWS"/>
<dbReference type="PDBsum" id="1UWT"/>
<dbReference type="PDBsum" id="1UWU"/>
<dbReference type="PDBsum" id="2CEQ"/>
<dbReference type="PDBsum" id="2CER"/>
<dbReference type="PDBsum" id="4EAM"/>
<dbReference type="PDBsum" id="4EAN"/>
<dbReference type="PDBsum" id="5I3D"/>
<dbReference type="PDBsum" id="5IXE"/>
<dbReference type="PDBsum" id="7UZ1"/>
<dbReference type="PDBsum" id="7UZ2"/>
<dbReference type="SMR" id="P22498"/>
<dbReference type="FunCoup" id="P22498">
    <property type="interactions" value="61"/>
</dbReference>
<dbReference type="STRING" id="273057.SSO3019"/>
<dbReference type="CAZy" id="GH1">
    <property type="family name" value="Glycoside Hydrolase Family 1"/>
</dbReference>
<dbReference type="iPTMnet" id="P22498"/>
<dbReference type="PaxDb" id="273057-SSO3019"/>
<dbReference type="EnsemblBacteria" id="AAK43121">
    <property type="protein sequence ID" value="AAK43121"/>
    <property type="gene ID" value="SSO3019"/>
</dbReference>
<dbReference type="KEGG" id="sso:SSO3019"/>
<dbReference type="PATRIC" id="fig|273057.12.peg.3113"/>
<dbReference type="eggNOG" id="arCOG05412">
    <property type="taxonomic scope" value="Archaea"/>
</dbReference>
<dbReference type="HOGENOM" id="CLU_001859_1_3_2"/>
<dbReference type="InParanoid" id="P22498"/>
<dbReference type="PhylomeDB" id="P22498"/>
<dbReference type="BRENDA" id="3.2.1.23">
    <property type="organism ID" value="6163"/>
</dbReference>
<dbReference type="BRENDA" id="3.2.1.55">
    <property type="organism ID" value="6163"/>
</dbReference>
<dbReference type="BRENDA" id="3.2.1.B26">
    <property type="organism ID" value="6163"/>
</dbReference>
<dbReference type="BRENDA" id="3.2.1.B34">
    <property type="organism ID" value="6163"/>
</dbReference>
<dbReference type="SABIO-RK" id="P22498"/>
<dbReference type="EvolutionaryTrace" id="P22498"/>
<dbReference type="PRO" id="PR:P22498"/>
<dbReference type="Proteomes" id="UP000001974">
    <property type="component" value="Chromosome"/>
</dbReference>
<dbReference type="GO" id="GO:0004565">
    <property type="term" value="F:beta-galactosidase activity"/>
    <property type="evidence" value="ECO:0007669"/>
    <property type="project" value="UniProtKB-EC"/>
</dbReference>
<dbReference type="GO" id="GO:0008422">
    <property type="term" value="F:beta-glucosidase activity"/>
    <property type="evidence" value="ECO:0000318"/>
    <property type="project" value="GO_Central"/>
</dbReference>
<dbReference type="GO" id="GO:0005975">
    <property type="term" value="P:carbohydrate metabolic process"/>
    <property type="evidence" value="ECO:0007669"/>
    <property type="project" value="InterPro"/>
</dbReference>
<dbReference type="Gene3D" id="3.20.20.80">
    <property type="entry name" value="Glycosidases"/>
    <property type="match status" value="1"/>
</dbReference>
<dbReference type="InterPro" id="IPR053427">
    <property type="entry name" value="Beta-galactosidase"/>
</dbReference>
<dbReference type="InterPro" id="IPR001360">
    <property type="entry name" value="Glyco_hydro_1"/>
</dbReference>
<dbReference type="InterPro" id="IPR018120">
    <property type="entry name" value="Glyco_hydro_1_AS"/>
</dbReference>
<dbReference type="InterPro" id="IPR033132">
    <property type="entry name" value="Glyco_hydro_1_N_CS"/>
</dbReference>
<dbReference type="InterPro" id="IPR017853">
    <property type="entry name" value="Glycoside_hydrolase_SF"/>
</dbReference>
<dbReference type="NCBIfam" id="NF041004">
    <property type="entry name" value="Beta_gal_BgaS"/>
    <property type="match status" value="1"/>
</dbReference>
<dbReference type="PANTHER" id="PTHR10353:SF209">
    <property type="entry name" value="GALACTOLIPID GALACTOSYLTRANSFERASE SFR2, CHLOROPLASTIC"/>
    <property type="match status" value="1"/>
</dbReference>
<dbReference type="PANTHER" id="PTHR10353">
    <property type="entry name" value="GLYCOSYL HYDROLASE"/>
    <property type="match status" value="1"/>
</dbReference>
<dbReference type="Pfam" id="PF00232">
    <property type="entry name" value="Glyco_hydro_1"/>
    <property type="match status" value="1"/>
</dbReference>
<dbReference type="PRINTS" id="PR00131">
    <property type="entry name" value="GLHYDRLASE1"/>
</dbReference>
<dbReference type="SUPFAM" id="SSF51445">
    <property type="entry name" value="(Trans)glycosidases"/>
    <property type="match status" value="1"/>
</dbReference>
<dbReference type="PROSITE" id="PS00572">
    <property type="entry name" value="GLYCOSYL_HYDROL_F1_1"/>
    <property type="match status" value="1"/>
</dbReference>
<dbReference type="PROSITE" id="PS00653">
    <property type="entry name" value="GLYCOSYL_HYDROL_F1_2"/>
    <property type="match status" value="1"/>
</dbReference>
<name>BGAL_SACS2</name>
<evidence type="ECO:0000255" key="1"/>
<evidence type="ECO:0000255" key="2">
    <source>
        <dbReference type="PROSITE-ProRule" id="PRU10055"/>
    </source>
</evidence>
<evidence type="ECO:0000269" key="3">
    <source>
    </source>
</evidence>
<evidence type="ECO:0000305" key="4"/>
<evidence type="ECO:0007829" key="5">
    <source>
        <dbReference type="PDB" id="1GOW"/>
    </source>
</evidence>
<evidence type="ECO:0007829" key="6">
    <source>
        <dbReference type="PDB" id="1UWI"/>
    </source>
</evidence>
<evidence type="ECO:0007829" key="7">
    <source>
        <dbReference type="PDB" id="5IXE"/>
    </source>
</evidence>
<evidence type="ECO:0007829" key="8">
    <source>
        <dbReference type="PDB" id="7UZ1"/>
    </source>
</evidence>
<evidence type="ECO:0007829" key="9">
    <source>
        <dbReference type="PDB" id="7UZ2"/>
    </source>
</evidence>
<comment type="catalytic activity">
    <reaction>
        <text>Hydrolysis of terminal non-reducing beta-D-galactose residues in beta-D-galactosides.</text>
        <dbReference type="EC" id="3.2.1.23"/>
    </reaction>
</comment>
<comment type="subunit">
    <text>Homotetramer.</text>
</comment>
<comment type="mass spectrometry" mass="56754.8" error="4.9" method="Electrospray" evidence="3"/>
<comment type="similarity">
    <text evidence="4">Belongs to the glycosyl hydrolase 1 family.</text>
</comment>
<comment type="caution">
    <text evidence="4">The DNA coding for this protein is not found in the complete genome of strain 98/2. Sequence in PubMed:10383958 could have originated from another strain.</text>
</comment>
<sequence length="489" mass="56692">MYSFPNSFRFGWSQAGFQSEMGTPGSEDPNTDWYKWVHDPENMAAGLVSGDLPENGPGYWGNYKTFHDNAQKMGLKIARLNVEWSRIFPNPLPRPQNFDESKQDVTEVEINENELKRLDEYANKDALNHYREIFKDLKSRGLYFILNMYHWPLPLWLHDPIRVRRGDFTGPSGWLSTRTVYEFARFSAYIAWKFDDLVDEYSTMNEPNVVGGLGYVGVKSGFPPGYLSFELSRRAMYNIIQAHARAYDGIKSVSKKPVGIIYANSSFQPLTDKDMEAVEMAENDNRWWFFDAIIRGEITRGNEKIVRDDLKGRLDWIGVNYYTRTVVKRTEKGYVSLGGYGHGCERNSVSLAGLPTSDFGWEFFPEGLYDVLTKYWNRYHLYMYVTENGIADDADYQRPYYLVSHVYQVHRAINSGADVRGYLHWSLADNYEWASGFSMRFGLLKVDYNTKRLYWRPSALVYREIATNGAITDEIEHLNSVPPVKPLRH</sequence>
<proteinExistence type="evidence at protein level"/>
<accession>P22498</accession>
<accession>Q9V2Z5</accession>
<feature type="chain" id="PRO_0000063867" description="Beta-galactosidase">
    <location>
        <begin position="1"/>
        <end position="489"/>
    </location>
</feature>
<feature type="active site" description="Proton donor" evidence="1">
    <location>
        <position position="206"/>
    </location>
</feature>
<feature type="active site" description="Nucleophile" evidence="2">
    <location>
        <position position="387"/>
    </location>
</feature>
<feature type="site" description="Not N6-methylated">
    <location>
        <position position="76"/>
    </location>
</feature>
<feature type="site" description="Not N6-methylated">
    <location>
        <position position="102"/>
    </location>
</feature>
<feature type="site" description="Not N6-methylated">
    <location>
        <position position="124"/>
    </location>
</feature>
<feature type="site" description="Not N6-methylated">
    <location>
        <position position="138"/>
    </location>
</feature>
<feature type="modified residue" description="N6-methyllysine; partial" evidence="3">
    <location>
        <position position="116"/>
    </location>
</feature>
<feature type="modified residue" description="N6-methyllysine" evidence="3">
    <location>
        <position position="135"/>
    </location>
</feature>
<feature type="modified residue" description="N6-methyllysine; partial" evidence="3">
    <location>
        <position position="273"/>
    </location>
</feature>
<feature type="modified residue" description="N6-methyllysine; partial" evidence="3">
    <location>
        <position position="311"/>
    </location>
</feature>
<feature type="modified residue" description="N6-methyllysine" evidence="3">
    <location>
        <position position="332"/>
    </location>
</feature>
<feature type="sequence conflict" description="In Ref. 1; AAA72843." evidence="4" ref="1">
    <original>A</original>
    <variation>H</variation>
    <location>
        <position position="235"/>
    </location>
</feature>
<feature type="strand" evidence="8">
    <location>
        <begin position="9"/>
        <end position="13"/>
    </location>
</feature>
<feature type="helix" evidence="8">
    <location>
        <begin position="16"/>
        <end position="19"/>
    </location>
</feature>
<feature type="helix" evidence="8">
    <location>
        <begin position="32"/>
        <end position="38"/>
    </location>
</feature>
<feature type="helix" evidence="8">
    <location>
        <begin position="40"/>
        <end position="44"/>
    </location>
</feature>
<feature type="helix" evidence="8">
    <location>
        <begin position="53"/>
        <end position="55"/>
    </location>
</feature>
<feature type="helix" evidence="8">
    <location>
        <begin position="59"/>
        <end position="72"/>
    </location>
</feature>
<feature type="strand" evidence="8">
    <location>
        <begin position="77"/>
        <end position="81"/>
    </location>
</feature>
<feature type="helix" evidence="8">
    <location>
        <begin position="84"/>
        <end position="87"/>
    </location>
</feature>
<feature type="helix" evidence="8">
    <location>
        <begin position="112"/>
        <end position="119"/>
    </location>
</feature>
<feature type="helix" evidence="8">
    <location>
        <begin position="124"/>
        <end position="139"/>
    </location>
</feature>
<feature type="strand" evidence="8">
    <location>
        <begin position="143"/>
        <end position="148"/>
    </location>
</feature>
<feature type="turn" evidence="8">
    <location>
        <begin position="155"/>
        <end position="157"/>
    </location>
</feature>
<feature type="helix" evidence="8">
    <location>
        <begin position="160"/>
        <end position="164"/>
    </location>
</feature>
<feature type="helix" evidence="8">
    <location>
        <begin position="173"/>
        <end position="175"/>
    </location>
</feature>
<feature type="helix" evidence="8">
    <location>
        <begin position="177"/>
        <end position="194"/>
    </location>
</feature>
<feature type="turn" evidence="8">
    <location>
        <begin position="195"/>
        <end position="197"/>
    </location>
</feature>
<feature type="strand" evidence="8">
    <location>
        <begin position="199"/>
        <end position="205"/>
    </location>
</feature>
<feature type="helix" evidence="8">
    <location>
        <begin position="207"/>
        <end position="215"/>
    </location>
</feature>
<feature type="helix" evidence="8">
    <location>
        <begin position="218"/>
        <end position="220"/>
    </location>
</feature>
<feature type="helix" evidence="8">
    <location>
        <begin position="229"/>
        <end position="251"/>
    </location>
</feature>
<feature type="strand" evidence="8">
    <location>
        <begin position="258"/>
        <end position="271"/>
    </location>
</feature>
<feature type="helix" evidence="7">
    <location>
        <begin position="272"/>
        <end position="274"/>
    </location>
</feature>
<feature type="helix" evidence="8">
    <location>
        <begin position="275"/>
        <end position="285"/>
    </location>
</feature>
<feature type="helix" evidence="8">
    <location>
        <begin position="287"/>
        <end position="295"/>
    </location>
</feature>
<feature type="strand" evidence="8">
    <location>
        <begin position="297"/>
        <end position="300"/>
    </location>
</feature>
<feature type="strand" evidence="8">
    <location>
        <begin position="303"/>
        <end position="306"/>
    </location>
</feature>
<feature type="turn" evidence="8">
    <location>
        <begin position="308"/>
        <end position="312"/>
    </location>
</feature>
<feature type="strand" evidence="8">
    <location>
        <begin position="315"/>
        <end position="330"/>
    </location>
</feature>
<feature type="strand" evidence="8">
    <location>
        <begin position="333"/>
        <end position="336"/>
    </location>
</feature>
<feature type="strand" evidence="5">
    <location>
        <begin position="338"/>
        <end position="340"/>
    </location>
</feature>
<feature type="strand" evidence="9">
    <location>
        <begin position="346"/>
        <end position="349"/>
    </location>
</feature>
<feature type="helix" evidence="8">
    <location>
        <begin position="366"/>
        <end position="379"/>
    </location>
</feature>
<feature type="strand" evidence="8">
    <location>
        <begin position="383"/>
        <end position="387"/>
    </location>
</feature>
<feature type="helix" evidence="8">
    <location>
        <begin position="398"/>
        <end position="414"/>
    </location>
</feature>
<feature type="strand" evidence="8">
    <location>
        <begin position="419"/>
        <end position="425"/>
    </location>
</feature>
<feature type="helix" evidence="8">
    <location>
        <begin position="433"/>
        <end position="438"/>
    </location>
</feature>
<feature type="strand" evidence="8">
    <location>
        <begin position="443"/>
        <end position="446"/>
    </location>
</feature>
<feature type="turn" evidence="8">
    <location>
        <begin position="448"/>
        <end position="450"/>
    </location>
</feature>
<feature type="strand" evidence="8">
    <location>
        <begin position="453"/>
        <end position="455"/>
    </location>
</feature>
<feature type="helix" evidence="8">
    <location>
        <begin position="457"/>
        <end position="468"/>
    </location>
</feature>
<feature type="helix" evidence="8">
    <location>
        <begin position="473"/>
        <end position="478"/>
    </location>
</feature>
<feature type="strand" evidence="6">
    <location>
        <begin position="484"/>
        <end position="487"/>
    </location>
</feature>
<keyword id="KW-0002">3D-structure</keyword>
<keyword id="KW-0903">Direct protein sequencing</keyword>
<keyword id="KW-0326">Glycosidase</keyword>
<keyword id="KW-0378">Hydrolase</keyword>
<keyword id="KW-0488">Methylation</keyword>
<keyword id="KW-1185">Reference proteome</keyword>
<organism>
    <name type="scientific">Saccharolobus solfataricus (strain ATCC 35092 / DSM 1617 / JCM 11322 / P2)</name>
    <name type="common">Sulfolobus solfataricus</name>
    <dbReference type="NCBI Taxonomy" id="273057"/>
    <lineage>
        <taxon>Archaea</taxon>
        <taxon>Thermoproteota</taxon>
        <taxon>Thermoprotei</taxon>
        <taxon>Sulfolobales</taxon>
        <taxon>Sulfolobaceae</taxon>
        <taxon>Saccharolobus</taxon>
    </lineage>
</organism>
<gene>
    <name type="primary">lacS</name>
    <name type="ordered locus">SSO3019</name>
</gene>
<reference key="1">
    <citation type="journal article" date="1990" name="Gene">
        <title>Isolation and sequencing of a new beta-galactosidase-encoding archaebacterial gene.</title>
        <authorList>
            <person name="Cubellis M.V."/>
            <person name="Rozzo C."/>
            <person name="Montecucchi P."/>
            <person name="Rossi M."/>
        </authorList>
    </citation>
    <scope>NUCLEOTIDE SEQUENCE [GENOMIC DNA]</scope>
    <scope>PROTEIN SEQUENCE OF 1-33</scope>
    <source>
        <strain>DSM 5833 / MT-4</strain>
    </source>
</reference>
<reference key="2">
    <citation type="journal article" date="1999" name="J. Bacteriol.">
        <title>Coordinate transcriptional control in the hyperthermophilic archaeon Sulfolobus solfataricus.</title>
        <authorList>
            <person name="Haseltine C."/>
            <person name="Montalvo-Rodriguez R."/>
            <person name="Bini E."/>
            <person name="Carl A."/>
            <person name="Blum P."/>
        </authorList>
    </citation>
    <scope>NUCLEOTIDE SEQUENCE [GENOMIC DNA]</scope>
    <source>
        <strain>98/2</strain>
    </source>
</reference>
<reference key="3">
    <citation type="journal article" date="2001" name="Proc. Natl. Acad. Sci. U.S.A.">
        <title>The complete genome of the crenarchaeon Sulfolobus solfataricus P2.</title>
        <authorList>
            <person name="She Q."/>
            <person name="Singh R.K."/>
            <person name="Confalonieri F."/>
            <person name="Zivanovic Y."/>
            <person name="Allard G."/>
            <person name="Awayez M.J."/>
            <person name="Chan-Weiher C.C.-Y."/>
            <person name="Clausen I.G."/>
            <person name="Curtis B.A."/>
            <person name="De Moors A."/>
            <person name="Erauso G."/>
            <person name="Fletcher C."/>
            <person name="Gordon P.M.K."/>
            <person name="Heikamp-de Jong I."/>
            <person name="Jeffries A.C."/>
            <person name="Kozera C.J."/>
            <person name="Medina N."/>
            <person name="Peng X."/>
            <person name="Thi-Ngoc H.P."/>
            <person name="Redder P."/>
            <person name="Schenk M.E."/>
            <person name="Theriault C."/>
            <person name="Tolstrup N."/>
            <person name="Charlebois R.L."/>
            <person name="Doolittle W.F."/>
            <person name="Duguet M."/>
            <person name="Gaasterland T."/>
            <person name="Garrett R.A."/>
            <person name="Ragan M.A."/>
            <person name="Sensen C.W."/>
            <person name="Van der Oost J."/>
        </authorList>
    </citation>
    <scope>NUCLEOTIDE SEQUENCE [LARGE SCALE GENOMIC DNA]</scope>
    <source>
        <strain>ATCC 35092 / DSM 1617 / JCM 11322 / P2</strain>
    </source>
</reference>
<reference key="4">
    <citation type="journal article" date="2004" name="J. Biol. Chem.">
        <title>Thermal stability and aggregation of Sulfolobus solfataricus beta-glycosidase are dependent upon the N-epsilon-methylation of specific lysyl residues: critical role of in vivo post-translational modifications.</title>
        <authorList>
            <person name="Febbraio F."/>
            <person name="Andolfo A."/>
            <person name="Tanfani F."/>
            <person name="Briante R."/>
            <person name="Gentile F."/>
            <person name="Formisano S."/>
            <person name="Vaccaro C."/>
            <person name="Scire A."/>
            <person name="Bertoli E."/>
            <person name="Pucci P."/>
            <person name="Nucci R."/>
        </authorList>
    </citation>
    <scope>METHYLATION AT LYS-116; LYS-135; LYS-273; LYS-311 AND LYS-332</scope>
    <scope>MASS SPECTROMETRY</scope>
</reference>
<reference key="5">
    <citation type="journal article" date="1997" name="J. Mol. Biol.">
        <title>Crystal structure of the beta-glycosidase from the hyperthermophilic archeon Sulfolobus solfataricus: resilience as a key factor in thermostability.</title>
        <authorList>
            <person name="Aguilar C.F."/>
            <person name="Sanderson I."/>
            <person name="Moracci M."/>
            <person name="Ciaramella M."/>
            <person name="Nucci R."/>
            <person name="Rossi M."/>
            <person name="Pearl L.H."/>
        </authorList>
    </citation>
    <scope>X-RAY CRYSTALLOGRAPHY (2.6 ANGSTROMS)</scope>
    <source>
        <strain>DSM 5833 / MT-4</strain>
    </source>
</reference>
<protein>
    <recommendedName>
        <fullName>Beta-galactosidase</fullName>
        <shortName>Lactase</shortName>
        <ecNumber>3.2.1.23</ecNumber>
    </recommendedName>
</protein>